<organism>
    <name type="scientific">Rotavirus A (isolate RVA/Monkey/South Africa/SA11-H96/1958/G3P5B[2])</name>
    <name type="common">RV-A</name>
    <name type="synonym">Simian Agent 11 (isolate SI/South Africa/H96/58)</name>
    <dbReference type="NCBI Taxonomy" id="450149"/>
    <lineage>
        <taxon>Viruses</taxon>
        <taxon>Riboviria</taxon>
        <taxon>Orthornavirae</taxon>
        <taxon>Duplornaviricota</taxon>
        <taxon>Resentoviricetes</taxon>
        <taxon>Reovirales</taxon>
        <taxon>Sedoreoviridae</taxon>
        <taxon>Rotavirus</taxon>
        <taxon>Rotavirus A</taxon>
    </lineage>
</organism>
<keyword id="KW-0167">Capsid protein</keyword>
<keyword id="KW-0175">Coiled coil</keyword>
<keyword id="KW-1015">Disulfide bond</keyword>
<keyword id="KW-0348">Hemagglutinin</keyword>
<keyword id="KW-1032">Host cell membrane</keyword>
<keyword id="KW-1035">Host cytoplasm</keyword>
<keyword id="KW-1037">Host cytoskeleton</keyword>
<keyword id="KW-1038">Host endoplasmic reticulum</keyword>
<keyword id="KW-1043">Host membrane</keyword>
<keyword id="KW-0945">Host-virus interaction</keyword>
<keyword id="KW-0472">Membrane</keyword>
<keyword id="KW-1152">Outer capsid protein</keyword>
<keyword id="KW-1185">Reference proteome</keyword>
<keyword id="KW-1161">Viral attachment to host cell</keyword>
<keyword id="KW-1162">Viral penetration into host cytoplasm</keyword>
<keyword id="KW-1173">Viral penetration via permeabilization of host membrane</keyword>
<keyword id="KW-0946">Virion</keyword>
<keyword id="KW-1160">Virus entry into host cell</keyword>
<comment type="function">
    <molecule>Outer capsid protein VP4</molecule>
    <text evidence="1 3 5 6">Spike-forming protein that mediates virion attachment to the host epithelial cell receptors and plays a major role in cell penetration, determination of host range restriction and virulence (PubMed:1649333). Rotavirus attachment and entry into the host cell probably involves multiple sequential contacts between the outer capsid proteins VP4 and VP7, and the cell receptors (PubMed:15165605, PubMed:9144247). It is subsequently lost, together with VP7, following virus entry into the host cell (PubMed:15165605). Following entry into the host cell, low intracellular or intravesicular Ca(2+) concentration probably causes the calcium-stabilized VP7 trimers to dissociate from the virion. This step is probably necessary for the membrane-disrupting entry step and the release of VP4, which is locked onto the virion by VP7. During the virus exit from the host cell, VP4 seems to be required to target the newly formed virions to the host cell lipid rafts (By similarity).</text>
</comment>
<comment type="function">
    <molecule>Outer capsid protein VP5*</molecule>
    <text evidence="1">Forms the spike 'foot' and 'body' and acts as a membrane permeabilization protein that mediates release of viral particles from endosomal compartments into the cytoplasm. During entry, the part of VP5* that protrudes from the virus folds back on itself and reorganizes from a local dimer to a trimer. This reorganization may be linked to membrane penetration by exposing VP5* hydrophobic region. In integrin-dependent strains, VP5* targets the integrin heterodimer ITGA2/ITGB1 for cell attachment.</text>
</comment>
<comment type="function">
    <molecule>Outer capsid protein VP8*</molecule>
    <text evidence="1">Forms the head of the spikes and mediates the recognition of specific host cell surface glycans. It is the viral hemagglutinin and an important target of neutralizing antibodies. In sialic acid-dependent strains, VP8* binds to host cell sialic acid, most probably a ganglioside, providing the initial contact. In some other strains, VP8* mediates the attachment to histo-blood group antigens (HBGAs) for viral entry.</text>
</comment>
<comment type="subunit">
    <molecule>Outer capsid protein VP4</molecule>
    <text evidence="1 8">Homotrimer. VP4 adopts a dimeric appearance above the capsid surface, while forming a trimeric base anchored inside the capsid layer. Only hints of the third molecule are observed above the capsid surface. It probably performs a series of molecular rearrangements during viral entry. Prior to trypsin cleavage, it is flexible. The priming trypsin cleavage triggers its rearrangement into rigid spikes with approximate two-fold symmetry of their protruding parts. After an unknown second triggering event, cleaved VP4 may undergo another rearrangement, in which two VP5* subunits fold back on themselves and join a third subunit to form a tightly associated trimer, shaped like a folded umbrella (By similarity). Interacts with VP6 (By similarity). Interacts with VP7 (By similarity).</text>
</comment>
<comment type="subunit">
    <molecule>Outer capsid protein VP5*</molecule>
    <text evidence="1 8">Homotrimer. The trimer is coiled-coil stabilized by its C-terminus, however, its N-terminus, known as antigen domain or 'body', seems to be flexible allowing it to self-associate either as a dimer or a trimer. The two- to three-fold reorganization and fold-back of VP5* may be linked to membrane penetration, by exposing its hydrophobic region (By similarity). Interacts with host ITGA2 (via ITAG2 I-domain); this interaction occurs when ITGA2 is part of the integrin heterodimer ITGA2/ITGB1 (PubMed:9144247).</text>
</comment>
<comment type="subcellular location">
    <molecule>Outer capsid protein VP4</molecule>
    <subcellularLocation>
        <location evidence="1 3">Virion</location>
    </subcellularLocation>
    <subcellularLocation>
        <location evidence="1">Host rough endoplasmic reticulum</location>
    </subcellularLocation>
    <subcellularLocation>
        <location evidence="1">Host cell membrane</location>
    </subcellularLocation>
    <subcellularLocation>
        <location evidence="1">Host cytoplasm</location>
        <location evidence="1">Host cytoskeleton</location>
    </subcellularLocation>
    <subcellularLocation>
        <location evidence="1">Host endoplasmic reticulum-Golgi intermediate compartment</location>
    </subcellularLocation>
    <text evidence="1 4">The outer layer contains 180 copies of VP4, grouped as 60 dimers (PubMed:2153941). Immature double-layered particles assembled in the cytoplasm bud across the membrane of the endoplasmic reticulum, acquiring during this process a transient lipid membrane that is modified with the ER resident viral glycoproteins NSP4 and VP7; these enveloped particles also contain VP4. As the particles move towards the interior of the ER cisternae, the transient lipid membrane and the non-structural protein NSP4 are lost, while the virus surface proteins VP4 and VP7 rearrange to form the outermost virus protein layer, yielding mature infectious triple-layered particles. VP4 also seems to associates with lipid rafts of the host cell membrane probably for the exit of the virus from the infected cell by an alternate pathway (By similarity).</text>
</comment>
<comment type="subcellular location">
    <molecule>Outer capsid protein VP8*</molecule>
    <subcellularLocation>
        <location evidence="1 3">Virion</location>
    </subcellularLocation>
    <text evidence="1">Outer capsid protein.</text>
</comment>
<comment type="subcellular location">
    <molecule>Outer capsid protein VP5*</molecule>
    <subcellularLocation>
        <location evidence="1 3">Virion</location>
    </subcellularLocation>
    <text evidence="1">Outer capsid protein.</text>
</comment>
<comment type="domain">
    <molecule>Outer capsid protein VP4</molecule>
    <text evidence="1">The VP4 spike is divided into a foot, a stalk and body, and a head.</text>
</comment>
<comment type="PTM">
    <molecule>Outer capsid protein VP4</molecule>
    <text evidence="1">Proteolytic cleavage by trypsin results in activation of VP4 functions and greatly increases infectivity. The penetration into the host cell is dependent on trypsin treatment of VP4. It produces two peptides, VP5* and VP8* that remain associated with the virion. Cleavage of VP4 by trypsin probably occurs in vivo in the lumen of the intestine prior to infection of enterocytes. Trypsin seems to be incorporated into the three-layered viral particles but remains inactive as long as the viral outer capsid is intact and would only be activated upon the solubilization of the latter.</text>
</comment>
<comment type="miscellaneous">
    <text evidence="1">In group A rotaviruses, VP4 defines the P serotype.</text>
</comment>
<comment type="miscellaneous">
    <text evidence="1 2">Some rotavirus strains are neuraminidase-sensitive and require sialic acid to attach to the cell surface. Some rotavirus strains are integrin-dependent. Some rotavirus strains depend on ganglioside for their entry into the host cell. Hsp70 also seems to be involved in the entry of some strains.</text>
</comment>
<comment type="miscellaneous">
    <text evidence="1 7">This strain probably uses sialic acid to attach to the host cell.</text>
</comment>
<comment type="similarity">
    <text evidence="1">Belongs to the rotavirus VP4 family.</text>
</comment>
<proteinExistence type="evidence at protein level"/>
<protein>
    <recommendedName>
        <fullName evidence="1">Outer capsid protein VP4</fullName>
    </recommendedName>
    <alternativeName>
        <fullName evidence="1">Hemagglutinin</fullName>
    </alternativeName>
    <component>
        <recommendedName>
            <fullName evidence="1">Outer capsid protein VP8*</fullName>
        </recommendedName>
    </component>
    <component>
        <recommendedName>
            <fullName evidence="1">Outer capsid protein VP5*</fullName>
        </recommendedName>
    </component>
</protein>
<feature type="chain" id="PRO_0000368116" description="Outer capsid protein VP4" evidence="1">
    <location>
        <begin position="1"/>
        <end position="776"/>
    </location>
</feature>
<feature type="chain" id="PRO_0000368117" description="Outer capsid protein VP8*" evidence="1">
    <location>
        <begin position="1"/>
        <end position="231"/>
    </location>
</feature>
<feature type="chain" id="PRO_0000368118" description="Outer capsid protein VP5*" evidence="1">
    <location>
        <begin position="248"/>
        <end position="776"/>
    </location>
</feature>
<feature type="region of interest" description="Spike head" evidence="1">
    <location>
        <begin position="65"/>
        <end position="224"/>
    </location>
</feature>
<feature type="region of interest" description="Spike body and stalk (antigen domain)" evidence="1">
    <location>
        <begin position="248"/>
        <end position="479"/>
    </location>
</feature>
<feature type="region of interest" description="DGE motif; interaction with ITGA2/ITGB1 heterodimer" evidence="5">
    <location>
        <begin position="308"/>
        <end position="310"/>
    </location>
</feature>
<feature type="region of interest" description="Hydrophobic; possible role in virus entry into host cell" evidence="1">
    <location>
        <begin position="389"/>
        <end position="409"/>
    </location>
</feature>
<feature type="region of interest" description="Spike foot" evidence="1">
    <location>
        <begin position="510"/>
        <end position="776"/>
    </location>
</feature>
<feature type="coiled-coil region" evidence="1">
    <location>
        <begin position="484"/>
        <end position="511"/>
    </location>
</feature>
<feature type="short sequence motif" description="DGE motif; interaction with ITGA2/ITGB1 heterodimer" evidence="1">
    <location>
        <begin position="308"/>
        <end position="310"/>
    </location>
</feature>
<feature type="short sequence motif" description="YGL motif; interaction with ITGA4" evidence="1">
    <location>
        <begin position="448"/>
        <end position="450"/>
    </location>
</feature>
<feature type="short sequence motif" description="KID motif; interaction with HSPA8" evidence="1">
    <location>
        <begin position="644"/>
        <end position="646"/>
    </location>
</feature>
<feature type="site" description="Binding to sialic acid" evidence="1">
    <location>
        <position position="101"/>
    </location>
</feature>
<feature type="site" description="Binding to sialic acid" evidence="1">
    <location>
        <position position="190"/>
    </location>
</feature>
<feature type="site" description="Cleavage" evidence="1">
    <location>
        <begin position="231"/>
        <end position="232"/>
    </location>
</feature>
<feature type="site" description="Cleavage" evidence="1">
    <location>
        <begin position="241"/>
        <end position="242"/>
    </location>
</feature>
<feature type="site" description="Cleavage; associated with enhancement of infectivity" evidence="1">
    <location>
        <begin position="247"/>
        <end position="248"/>
    </location>
</feature>
<feature type="disulfide bond" evidence="1">
    <location>
        <begin position="203"/>
        <end position="216"/>
    </location>
</feature>
<feature type="disulfide bond" evidence="1">
    <location>
        <begin position="318"/>
        <end position="380"/>
    </location>
</feature>
<evidence type="ECO:0000255" key="1">
    <source>
        <dbReference type="HAMAP-Rule" id="MF_04132"/>
    </source>
</evidence>
<evidence type="ECO:0000269" key="2">
    <source>
    </source>
</evidence>
<evidence type="ECO:0000269" key="3">
    <source>
    </source>
</evidence>
<evidence type="ECO:0000269" key="4">
    <source>
    </source>
</evidence>
<evidence type="ECO:0000269" key="5">
    <source>
    </source>
</evidence>
<evidence type="ECO:0000303" key="6">
    <source>
    </source>
</evidence>
<evidence type="ECO:0000303" key="7">
    <source>
    </source>
</evidence>
<evidence type="ECO:0000305" key="8">
    <source>
    </source>
</evidence>
<sequence length="776" mass="86775">MASLIYRQLLTNSYTVDLSDEIQEIGSTKSQNVTINPGPFAQTGYAPVNWGPGEINDSTTVEPLLDGPYQPTTFNPPVDYWMLLAPTTPGVIVEGTNNTDRWLATILIEPNVQSENRTYTIFGIQEQLTVSNTSQDQWKFIDVVKTTANGSIGQYGPLLSSPKLYAVMKHNEKLYTYEGQTPNARTAHYSTTNYDSVNMTAFCDFYIIPRSEESKCTEYINNGLPPIQNTRNVVPLSLTARDVIHYRAQANEDIVISKTSLWKEMQYNRDITIRFKFANTIIKSGGLGYKWSEISFKPANYQYTYTRDGEEVTAHTTCSVNGVNDFSFNGGYLPTDFVVSKFEVIKENSYVYIDYWDDSQAFRNVVYVRSLAANLNSVMCTGGSYNFSLPVGQWPVLTGGAVSLHSAGVTLSTQFTDFVSLNSLRFRFRLAVEEPHFKLTRTRLDRLYGLPAADPNNGKEYYEIAGRFSLISLVPSNDDYQTPIANSVTVRQDLERQLGELREEFNALSQEIAMSQLIDLALLPLDMFSMFSGIKSTIDAAKSMATNVMKKFKKSGLANSVSTLTDSLSDAASSISRGSSIRSIGSSASAWTDVSTQITDISSSVSSVSTQTSTISRRLRLKEMATQTEGMNFDDISAAVLKTKIDKSTQISPNTIPDIVTEASEKFIPNRAYRVINNDDVFEAGIDGKFFAYKVDTFEEIPFDVQKFADLVTDSPVISAIIDFKTLKNLNDNYGITKQQAFNLLRSDPRVLREFINQDNPIIRNRIEQLIMQCRL</sequence>
<name>VP4_ROTSH</name>
<dbReference type="EMBL" id="DQ841262">
    <property type="protein sequence ID" value="ABH10616.1"/>
    <property type="molecule type" value="Genomic_RNA"/>
</dbReference>
<dbReference type="RefSeq" id="YP_002302230.1">
    <property type="nucleotide sequence ID" value="NC_011510.2"/>
</dbReference>
<dbReference type="SMR" id="A2T3T2"/>
<dbReference type="GeneID" id="7011406"/>
<dbReference type="KEGG" id="vg:7011406"/>
<dbReference type="EvolutionaryTrace" id="A2T3T2"/>
<dbReference type="Proteomes" id="UP000001119">
    <property type="component" value="Genome"/>
</dbReference>
<dbReference type="GO" id="GO:0044172">
    <property type="term" value="C:host cell endoplasmic reticulum-Golgi intermediate compartment"/>
    <property type="evidence" value="ECO:0007669"/>
    <property type="project" value="UniProtKB-SubCell"/>
</dbReference>
<dbReference type="GO" id="GO:0020002">
    <property type="term" value="C:host cell plasma membrane"/>
    <property type="evidence" value="ECO:0007669"/>
    <property type="project" value="UniProtKB-SubCell"/>
</dbReference>
<dbReference type="GO" id="GO:0044168">
    <property type="term" value="C:host cell rough endoplasmic reticulum"/>
    <property type="evidence" value="ECO:0007669"/>
    <property type="project" value="UniProtKB-SubCell"/>
</dbReference>
<dbReference type="GO" id="GO:0044163">
    <property type="term" value="C:host cytoskeleton"/>
    <property type="evidence" value="ECO:0007669"/>
    <property type="project" value="UniProtKB-SubCell"/>
</dbReference>
<dbReference type="GO" id="GO:0016020">
    <property type="term" value="C:membrane"/>
    <property type="evidence" value="ECO:0007669"/>
    <property type="project" value="UniProtKB-KW"/>
</dbReference>
<dbReference type="GO" id="GO:0039624">
    <property type="term" value="C:viral outer capsid"/>
    <property type="evidence" value="ECO:0007669"/>
    <property type="project" value="UniProtKB-UniRule"/>
</dbReference>
<dbReference type="GO" id="GO:0039665">
    <property type="term" value="P:permeabilization of host organelle membrane involved in viral entry into host cell"/>
    <property type="evidence" value="ECO:0007669"/>
    <property type="project" value="UniProtKB-UniRule"/>
</dbReference>
<dbReference type="GO" id="GO:0019062">
    <property type="term" value="P:virion attachment to host cell"/>
    <property type="evidence" value="ECO:0007669"/>
    <property type="project" value="UniProtKB-UniRule"/>
</dbReference>
<dbReference type="Gene3D" id="1.20.5.170">
    <property type="match status" value="1"/>
</dbReference>
<dbReference type="Gene3D" id="2.60.120.200">
    <property type="match status" value="1"/>
</dbReference>
<dbReference type="HAMAP" id="MF_04132">
    <property type="entry name" value="Rota_A_VP4"/>
    <property type="match status" value="1"/>
</dbReference>
<dbReference type="HAMAP" id="MF_04125">
    <property type="entry name" value="Rota_VP4"/>
    <property type="match status" value="1"/>
</dbReference>
<dbReference type="InterPro" id="IPR013320">
    <property type="entry name" value="ConA-like_dom_sf"/>
</dbReference>
<dbReference type="InterPro" id="IPR042546">
    <property type="entry name" value="Rota_A_VP4"/>
</dbReference>
<dbReference type="InterPro" id="IPR035330">
    <property type="entry name" value="Rota_VP4_MID"/>
</dbReference>
<dbReference type="InterPro" id="IPR038017">
    <property type="entry name" value="Rota_VP4_MID_sf"/>
</dbReference>
<dbReference type="InterPro" id="IPR000416">
    <property type="entry name" value="VP4_concanavalin-like"/>
</dbReference>
<dbReference type="InterPro" id="IPR035329">
    <property type="entry name" value="VP4_helical"/>
</dbReference>
<dbReference type="Pfam" id="PF17477">
    <property type="entry name" value="Rota_VP4_MID"/>
    <property type="match status" value="1"/>
</dbReference>
<dbReference type="Pfam" id="PF00426">
    <property type="entry name" value="VP4_haemagglut"/>
    <property type="match status" value="1"/>
</dbReference>
<dbReference type="Pfam" id="PF17478">
    <property type="entry name" value="VP4_helical"/>
    <property type="match status" value="1"/>
</dbReference>
<dbReference type="SUPFAM" id="SSF49899">
    <property type="entry name" value="Concanavalin A-like lectins/glucanases"/>
    <property type="match status" value="1"/>
</dbReference>
<dbReference type="SUPFAM" id="SSF111379">
    <property type="entry name" value="VP4 membrane interaction domain"/>
    <property type="match status" value="1"/>
</dbReference>
<reference key="1">
    <citation type="journal article" date="2007" name="Virology">
        <title>Genome heterogeneity of SA11 rotavirus due to reassortment with 'O' agent.</title>
        <authorList>
            <person name="Small C."/>
            <person name="Barro M."/>
            <person name="Brown T.L."/>
            <person name="Patton J.T."/>
        </authorList>
    </citation>
    <scope>NUCLEOTIDE SEQUENCE [GENOMIC RNA]</scope>
</reference>
<reference key="2">
    <citation type="journal article" date="1990" name="Nature">
        <title>Localization of VP4 neutralization sites in rotavirus by three-dimensional cryo-electron microscopy.</title>
        <authorList>
            <person name="Prasad B.V."/>
            <person name="Burns J.W."/>
            <person name="Marietta E."/>
            <person name="Estes M.K."/>
            <person name="Chiu W."/>
        </authorList>
    </citation>
    <scope>STRUCTURE BY ELECTRON MICROSCOPY OF CAPSID SHELL</scope>
    <scope>SUBCELLULAR LOCATION (OUTER CAPSID PROTEIN VP4)</scope>
</reference>
<reference key="3">
    <citation type="journal article" date="1991" name="J. Virol.">
        <title>Rotavirus spike structure and polypeptide composition.</title>
        <authorList>
            <person name="Anthony I.D."/>
            <person name="Bullivant S."/>
            <person name="Dayal S."/>
            <person name="Bellamy A.R."/>
            <person name="Berriman J.A."/>
        </authorList>
    </citation>
    <scope>FUNCTION (OUTER CAPSID PROTEIN VP4)</scope>
    <scope>SUBCELLULAR LOCATION (OUTER CAPSID PROTEIN VP4)</scope>
</reference>
<reference key="4">
    <citation type="journal article" date="1997" name="Proc. Natl. Acad. Sci. U.S.A.">
        <title>Rotavirus contains integrin ligand sequences and a disintegrin-like domain that are implicated in virus entry into cells.</title>
        <authorList>
            <person name="Coulson B.S."/>
            <person name="Londrigan S.L."/>
            <person name="Lee D.J."/>
        </authorList>
    </citation>
    <scope>FUNCTION (OUTER CAPSID PROTEIN VP4)</scope>
    <scope>INTERACTION WITH INTEGRIN HETERODIMER ITGA2/ITGB1 (OUTER CAPSID PROTEIN VP5*)</scope>
</reference>
<reference key="5">
    <citation type="journal article" date="2004" name="Trends Microbiol.">
        <title>Multistep entry of rotavirus into cells: a Versaillesque dance.</title>
        <authorList>
            <person name="Lopez S."/>
            <person name="Arias C.F."/>
        </authorList>
    </citation>
    <scope>REVIEW</scope>
</reference>
<reference key="6">
    <citation type="journal article" date="2006" name="Glycoconj. J.">
        <title>Role of sialic acids in rotavirus infection.</title>
        <authorList>
            <person name="Isa P."/>
            <person name="Arias C.F."/>
            <person name="Lopez S."/>
        </authorList>
    </citation>
    <scope>REVIEW</scope>
</reference>
<organismHost>
    <name type="scientific">Chlorocebus pygerythrus</name>
    <name type="common">Vervet monkey</name>
    <name type="synonym">Cercopithecus pygerythrus</name>
    <dbReference type="NCBI Taxonomy" id="60710"/>
</organismHost>
<accession>A2T3T2</accession>